<feature type="chain" id="PRO_0000347183" description="Ovarian cancer-related protein 1">
    <location>
        <begin position="1"/>
        <end position="76"/>
    </location>
</feature>
<name>OCR1_HUMAN</name>
<gene>
    <name type="primary">OCR1</name>
</gene>
<accession>Q9BZK8</accession>
<dbReference type="EMBL" id="AF314543">
    <property type="protein sequence ID" value="AAG59813.1"/>
    <property type="molecule type" value="mRNA"/>
</dbReference>
<dbReference type="EMBL" id="CH471067">
    <property type="protein sequence ID" value="EAW91427.1"/>
    <property type="molecule type" value="Genomic_DNA"/>
</dbReference>
<dbReference type="iPTMnet" id="Q9BZK8"/>
<dbReference type="PhosphoSitePlus" id="Q9BZK8"/>
<dbReference type="BioMuta" id="OCR1"/>
<dbReference type="DMDM" id="74717763"/>
<dbReference type="jPOST" id="Q9BZK8"/>
<dbReference type="neXtProt" id="NX_Q9BZK8"/>
<dbReference type="InParanoid" id="Q9BZK8"/>
<dbReference type="PAN-GO" id="Q9BZK8">
    <property type="GO annotations" value="0 GO annotations based on evolutionary models"/>
</dbReference>
<dbReference type="Pharos" id="Q9BZK8">
    <property type="development level" value="Tdark"/>
</dbReference>
<dbReference type="PRO" id="PR:Q9BZK8"/>
<dbReference type="Proteomes" id="UP000005640">
    <property type="component" value="Unplaced"/>
</dbReference>
<dbReference type="RNAct" id="Q9BZK8">
    <property type="molecule type" value="protein"/>
</dbReference>
<proteinExistence type="predicted"/>
<sequence>MPVAPSNHCDNQCPHIFSKALVVSVAPSPPRDKPAPYTFTDVSSLCGLQKKCEGGKAMLFTLKRDRFSFLLFVSHC</sequence>
<reference key="1">
    <citation type="submission" date="2000-10" db="EMBL/GenBank/DDBJ databases">
        <title>Homo sapiens ovarian cancer-related (OCR1) gene.</title>
        <authorList>
            <person name="Yue W."/>
            <person name="Sun L."/>
            <person name="Li C."/>
        </authorList>
    </citation>
    <scope>NUCLEOTIDE SEQUENCE [MRNA]</scope>
    <source>
        <tissue>Ovarian carcinoma</tissue>
    </source>
</reference>
<reference key="2">
    <citation type="submission" date="2005-07" db="EMBL/GenBank/DDBJ databases">
        <authorList>
            <person name="Mural R.J."/>
            <person name="Istrail S."/>
            <person name="Sutton G.G."/>
            <person name="Florea L."/>
            <person name="Halpern A.L."/>
            <person name="Mobarry C.M."/>
            <person name="Lippert R."/>
            <person name="Walenz B."/>
            <person name="Shatkay H."/>
            <person name="Dew I."/>
            <person name="Miller J.R."/>
            <person name="Flanigan M.J."/>
            <person name="Edwards N.J."/>
            <person name="Bolanos R."/>
            <person name="Fasulo D."/>
            <person name="Halldorsson B.V."/>
            <person name="Hannenhalli S."/>
            <person name="Turner R."/>
            <person name="Yooseph S."/>
            <person name="Lu F."/>
            <person name="Nusskern D.R."/>
            <person name="Shue B.C."/>
            <person name="Zheng X.H."/>
            <person name="Zhong F."/>
            <person name="Delcher A.L."/>
            <person name="Huson D.H."/>
            <person name="Kravitz S.A."/>
            <person name="Mouchard L."/>
            <person name="Reinert K."/>
            <person name="Remington K.A."/>
            <person name="Clark A.G."/>
            <person name="Waterman M.S."/>
            <person name="Eichler E.E."/>
            <person name="Adams M.D."/>
            <person name="Hunkapiller M.W."/>
            <person name="Myers E.W."/>
            <person name="Venter J.C."/>
        </authorList>
    </citation>
    <scope>NUCLEOTIDE SEQUENCE [LARGE SCALE GENOMIC DNA]</scope>
</reference>
<protein>
    <recommendedName>
        <fullName>Ovarian cancer-related protein 1</fullName>
    </recommendedName>
</protein>
<organism>
    <name type="scientific">Homo sapiens</name>
    <name type="common">Human</name>
    <dbReference type="NCBI Taxonomy" id="9606"/>
    <lineage>
        <taxon>Eukaryota</taxon>
        <taxon>Metazoa</taxon>
        <taxon>Chordata</taxon>
        <taxon>Craniata</taxon>
        <taxon>Vertebrata</taxon>
        <taxon>Euteleostomi</taxon>
        <taxon>Mammalia</taxon>
        <taxon>Eutheria</taxon>
        <taxon>Euarchontoglires</taxon>
        <taxon>Primates</taxon>
        <taxon>Haplorrhini</taxon>
        <taxon>Catarrhini</taxon>
        <taxon>Hominidae</taxon>
        <taxon>Homo</taxon>
    </lineage>
</organism>
<keyword id="KW-1185">Reference proteome</keyword>